<organism>
    <name type="scientific">Streptococcus mutans serotype c (strain ATCC 700610 / UA159)</name>
    <dbReference type="NCBI Taxonomy" id="210007"/>
    <lineage>
        <taxon>Bacteria</taxon>
        <taxon>Bacillati</taxon>
        <taxon>Bacillota</taxon>
        <taxon>Bacilli</taxon>
        <taxon>Lactobacillales</taxon>
        <taxon>Streptococcaceae</taxon>
        <taxon>Streptococcus</taxon>
    </lineage>
</organism>
<comment type="function">
    <text evidence="1">An aminoacyl-tRNA editing enzyme that deacylates mischarged D-aminoacyl-tRNAs. Also deacylates mischarged glycyl-tRNA(Ala), protecting cells against glycine mischarging by AlaRS. Acts via tRNA-based rather than protein-based catalysis; rejects L-amino acids rather than detecting D-amino acids in the active site. By recycling D-aminoacyl-tRNA to D-amino acids and free tRNA molecules, this enzyme counteracts the toxicity associated with the formation of D-aminoacyl-tRNA entities in vivo and helps enforce protein L-homochirality.</text>
</comment>
<comment type="catalytic activity">
    <reaction evidence="1">
        <text>glycyl-tRNA(Ala) + H2O = tRNA(Ala) + glycine + H(+)</text>
        <dbReference type="Rhea" id="RHEA:53744"/>
        <dbReference type="Rhea" id="RHEA-COMP:9657"/>
        <dbReference type="Rhea" id="RHEA-COMP:13640"/>
        <dbReference type="ChEBI" id="CHEBI:15377"/>
        <dbReference type="ChEBI" id="CHEBI:15378"/>
        <dbReference type="ChEBI" id="CHEBI:57305"/>
        <dbReference type="ChEBI" id="CHEBI:78442"/>
        <dbReference type="ChEBI" id="CHEBI:78522"/>
        <dbReference type="EC" id="3.1.1.96"/>
    </reaction>
</comment>
<comment type="catalytic activity">
    <reaction evidence="1">
        <text>a D-aminoacyl-tRNA + H2O = a tRNA + a D-alpha-amino acid + H(+)</text>
        <dbReference type="Rhea" id="RHEA:13953"/>
        <dbReference type="Rhea" id="RHEA-COMP:10123"/>
        <dbReference type="Rhea" id="RHEA-COMP:10124"/>
        <dbReference type="ChEBI" id="CHEBI:15377"/>
        <dbReference type="ChEBI" id="CHEBI:15378"/>
        <dbReference type="ChEBI" id="CHEBI:59871"/>
        <dbReference type="ChEBI" id="CHEBI:78442"/>
        <dbReference type="ChEBI" id="CHEBI:79333"/>
        <dbReference type="EC" id="3.1.1.96"/>
    </reaction>
</comment>
<comment type="subunit">
    <text evidence="1">Homodimer.</text>
</comment>
<comment type="subcellular location">
    <subcellularLocation>
        <location evidence="1">Cytoplasm</location>
    </subcellularLocation>
</comment>
<comment type="domain">
    <text evidence="1">A Gly-cisPro motif from one monomer fits into the active site of the other monomer to allow specific chiral rejection of L-amino acids.</text>
</comment>
<comment type="similarity">
    <text evidence="1">Belongs to the DTD family.</text>
</comment>
<evidence type="ECO:0000255" key="1">
    <source>
        <dbReference type="HAMAP-Rule" id="MF_00518"/>
    </source>
</evidence>
<reference key="1">
    <citation type="journal article" date="2002" name="Proc. Natl. Acad. Sci. U.S.A.">
        <title>Genome sequence of Streptococcus mutans UA159, a cariogenic dental pathogen.</title>
        <authorList>
            <person name="Ajdic D.J."/>
            <person name="McShan W.M."/>
            <person name="McLaughlin R.E."/>
            <person name="Savic G."/>
            <person name="Chang J."/>
            <person name="Carson M.B."/>
            <person name="Primeaux C."/>
            <person name="Tian R."/>
            <person name="Kenton S."/>
            <person name="Jia H.G."/>
            <person name="Lin S.P."/>
            <person name="Qian Y."/>
            <person name="Li S."/>
            <person name="Zhu H."/>
            <person name="Najar F.Z."/>
            <person name="Lai H."/>
            <person name="White J."/>
            <person name="Roe B.A."/>
            <person name="Ferretti J.J."/>
        </authorList>
    </citation>
    <scope>NUCLEOTIDE SEQUENCE [LARGE SCALE GENOMIC DNA]</scope>
    <source>
        <strain>ATCC 700610 / UA159</strain>
    </source>
</reference>
<proteinExistence type="inferred from homology"/>
<name>DTD_STRMU</name>
<accession>Q8DS08</accession>
<gene>
    <name evidence="1" type="primary">dtd</name>
    <name type="ordered locus">SMU_2043c</name>
</gene>
<dbReference type="EC" id="3.1.1.96" evidence="1"/>
<dbReference type="EMBL" id="AE014133">
    <property type="protein sequence ID" value="AAN59643.1"/>
    <property type="molecule type" value="Genomic_DNA"/>
</dbReference>
<dbReference type="RefSeq" id="NP_722337.1">
    <property type="nucleotide sequence ID" value="NC_004350.2"/>
</dbReference>
<dbReference type="RefSeq" id="WP_002262355.1">
    <property type="nucleotide sequence ID" value="NC_004350.2"/>
</dbReference>
<dbReference type="SMR" id="Q8DS08"/>
<dbReference type="STRING" id="210007.SMU_2043c"/>
<dbReference type="KEGG" id="smu:SMU_2043c"/>
<dbReference type="PATRIC" id="fig|210007.7.peg.1821"/>
<dbReference type="eggNOG" id="COG1490">
    <property type="taxonomic scope" value="Bacteria"/>
</dbReference>
<dbReference type="HOGENOM" id="CLU_076901_1_0_9"/>
<dbReference type="OrthoDB" id="9801395at2"/>
<dbReference type="PhylomeDB" id="Q8DS08"/>
<dbReference type="Proteomes" id="UP000002512">
    <property type="component" value="Chromosome"/>
</dbReference>
<dbReference type="GO" id="GO:0005737">
    <property type="term" value="C:cytoplasm"/>
    <property type="evidence" value="ECO:0007669"/>
    <property type="project" value="UniProtKB-SubCell"/>
</dbReference>
<dbReference type="GO" id="GO:0051500">
    <property type="term" value="F:D-tyrosyl-tRNA(Tyr) deacylase activity"/>
    <property type="evidence" value="ECO:0007669"/>
    <property type="project" value="TreeGrafter"/>
</dbReference>
<dbReference type="GO" id="GO:0106026">
    <property type="term" value="F:Gly-tRNA(Ala) deacylase activity"/>
    <property type="evidence" value="ECO:0007669"/>
    <property type="project" value="UniProtKB-UniRule"/>
</dbReference>
<dbReference type="GO" id="GO:0043908">
    <property type="term" value="F:Ser(Gly)-tRNA(Ala) hydrolase activity"/>
    <property type="evidence" value="ECO:0007669"/>
    <property type="project" value="UniProtKB-UniRule"/>
</dbReference>
<dbReference type="GO" id="GO:0000049">
    <property type="term" value="F:tRNA binding"/>
    <property type="evidence" value="ECO:0007669"/>
    <property type="project" value="UniProtKB-UniRule"/>
</dbReference>
<dbReference type="GO" id="GO:0019478">
    <property type="term" value="P:D-amino acid catabolic process"/>
    <property type="evidence" value="ECO:0007669"/>
    <property type="project" value="UniProtKB-UniRule"/>
</dbReference>
<dbReference type="CDD" id="cd00563">
    <property type="entry name" value="Dtyr_deacylase"/>
    <property type="match status" value="1"/>
</dbReference>
<dbReference type="FunFam" id="3.50.80.10:FF:000001">
    <property type="entry name" value="D-aminoacyl-tRNA deacylase"/>
    <property type="match status" value="1"/>
</dbReference>
<dbReference type="Gene3D" id="3.50.80.10">
    <property type="entry name" value="D-tyrosyl-tRNA(Tyr) deacylase"/>
    <property type="match status" value="1"/>
</dbReference>
<dbReference type="HAMAP" id="MF_00518">
    <property type="entry name" value="Deacylase_Dtd"/>
    <property type="match status" value="1"/>
</dbReference>
<dbReference type="InterPro" id="IPR003732">
    <property type="entry name" value="Daa-tRNA_deacyls_DTD"/>
</dbReference>
<dbReference type="InterPro" id="IPR023509">
    <property type="entry name" value="DTD-like_sf"/>
</dbReference>
<dbReference type="NCBIfam" id="TIGR00256">
    <property type="entry name" value="D-aminoacyl-tRNA deacylase"/>
    <property type="match status" value="1"/>
</dbReference>
<dbReference type="PANTHER" id="PTHR10472:SF5">
    <property type="entry name" value="D-AMINOACYL-TRNA DEACYLASE 1"/>
    <property type="match status" value="1"/>
</dbReference>
<dbReference type="PANTHER" id="PTHR10472">
    <property type="entry name" value="D-TYROSYL-TRNA TYR DEACYLASE"/>
    <property type="match status" value="1"/>
</dbReference>
<dbReference type="Pfam" id="PF02580">
    <property type="entry name" value="Tyr_Deacylase"/>
    <property type="match status" value="1"/>
</dbReference>
<dbReference type="SUPFAM" id="SSF69500">
    <property type="entry name" value="DTD-like"/>
    <property type="match status" value="1"/>
</dbReference>
<protein>
    <recommendedName>
        <fullName evidence="1">D-aminoacyl-tRNA deacylase</fullName>
        <shortName evidence="1">DTD</shortName>
        <ecNumber evidence="1">3.1.1.96</ecNumber>
    </recommendedName>
    <alternativeName>
        <fullName evidence="1">Gly-tRNA(Ala) deacylase</fullName>
    </alternativeName>
</protein>
<sequence>MKIVIQRVMKASLTVNGKSRASINQGLVLLVGIGPDDVQEDLTYAVRKITNMRIFSDEEGKMNLSVRDIKGEVLSVSQFTLFANTKKGNRPAFTGAAQADLASYLYDQFNQELAQFVPVQTGIFGSDMQVSLTNDGPVTILLDTKNKE</sequence>
<feature type="chain" id="PRO_0000164600" description="D-aminoacyl-tRNA deacylase">
    <location>
        <begin position="1"/>
        <end position="148"/>
    </location>
</feature>
<feature type="short sequence motif" description="Gly-cisPro motif, important for rejection of L-amino acids" evidence="1">
    <location>
        <begin position="136"/>
        <end position="137"/>
    </location>
</feature>
<keyword id="KW-0963">Cytoplasm</keyword>
<keyword id="KW-0378">Hydrolase</keyword>
<keyword id="KW-1185">Reference proteome</keyword>
<keyword id="KW-0694">RNA-binding</keyword>
<keyword id="KW-0820">tRNA-binding</keyword>